<keyword id="KW-0007">Acetylation</keyword>
<keyword id="KW-0378">Hydrolase</keyword>
<keyword id="KW-0456">Lyase</keyword>
<keyword id="KW-0460">Magnesium</keyword>
<keyword id="KW-0479">Metal-binding</keyword>
<keyword id="KW-0496">Mitochondrion</keyword>
<keyword id="KW-1185">Reference proteome</keyword>
<keyword id="KW-0808">Transferase</keyword>
<keyword id="KW-0809">Transit peptide</keyword>
<accession>Q8R4N0</accession>
<accession>Q9D7D0</accession>
<dbReference type="EC" id="4.1.3.25" evidence="1"/>
<dbReference type="EC" id="3.1.2.30" evidence="1"/>
<dbReference type="EC" id="2.3.3.-" evidence="1"/>
<dbReference type="EC" id="2.3.3.9" evidence="1"/>
<dbReference type="EMBL" id="AF428254">
    <property type="protein sequence ID" value="AAL84704.1"/>
    <property type="molecule type" value="mRNA"/>
</dbReference>
<dbReference type="EMBL" id="AK009345">
    <property type="protein sequence ID" value="BAB26232.1"/>
    <property type="molecule type" value="mRNA"/>
</dbReference>
<dbReference type="EMBL" id="BC023398">
    <property type="protein sequence ID" value="AAH23398.1"/>
    <property type="molecule type" value="mRNA"/>
</dbReference>
<dbReference type="CCDS" id="CCDS27346.1"/>
<dbReference type="RefSeq" id="NP_083832.2">
    <property type="nucleotide sequence ID" value="NM_029556.3"/>
</dbReference>
<dbReference type="SMR" id="Q8R4N0"/>
<dbReference type="BioGRID" id="213580">
    <property type="interactions" value="6"/>
</dbReference>
<dbReference type="FunCoup" id="Q8R4N0">
    <property type="interactions" value="1004"/>
</dbReference>
<dbReference type="STRING" id="10090.ENSMUSP00000026625"/>
<dbReference type="GlyGen" id="Q8R4N0">
    <property type="glycosylation" value="2 sites, 1 O-linked glycan (1 site)"/>
</dbReference>
<dbReference type="iPTMnet" id="Q8R4N0"/>
<dbReference type="PhosphoSitePlus" id="Q8R4N0"/>
<dbReference type="SwissPalm" id="Q8R4N0"/>
<dbReference type="REPRODUCTION-2DPAGE" id="Q8R4N0"/>
<dbReference type="jPOST" id="Q8R4N0"/>
<dbReference type="PaxDb" id="10090-ENSMUSP00000026625"/>
<dbReference type="PeptideAtlas" id="Q8R4N0"/>
<dbReference type="ProteomicsDB" id="283314"/>
<dbReference type="Pumba" id="Q8R4N0"/>
<dbReference type="Antibodypedia" id="25197">
    <property type="antibodies" value="61 antibodies from 16 providers"/>
</dbReference>
<dbReference type="DNASU" id="69634"/>
<dbReference type="Ensembl" id="ENSMUST00000026625.7">
    <property type="protein sequence ID" value="ENSMUSP00000026625.6"/>
    <property type="gene ID" value="ENSMUSG00000025545.11"/>
</dbReference>
<dbReference type="GeneID" id="69634"/>
<dbReference type="KEGG" id="mmu:69634"/>
<dbReference type="UCSC" id="uc007vax.2">
    <property type="organism name" value="mouse"/>
</dbReference>
<dbReference type="AGR" id="MGI:1916884"/>
<dbReference type="CTD" id="171425"/>
<dbReference type="MGI" id="MGI:1916884">
    <property type="gene designation" value="Clybl"/>
</dbReference>
<dbReference type="VEuPathDB" id="HostDB:ENSMUSG00000025545"/>
<dbReference type="eggNOG" id="ENOG502QQPK">
    <property type="taxonomic scope" value="Eukaryota"/>
</dbReference>
<dbReference type="GeneTree" id="ENSGT00390000017163"/>
<dbReference type="HOGENOM" id="CLU_044864_1_0_1"/>
<dbReference type="InParanoid" id="Q8R4N0"/>
<dbReference type="OMA" id="AWLFCPA"/>
<dbReference type="OrthoDB" id="1773at2759"/>
<dbReference type="PhylomeDB" id="Q8R4N0"/>
<dbReference type="TreeFam" id="TF313596"/>
<dbReference type="BRENDA" id="4.1.3.6">
    <property type="organism ID" value="3474"/>
</dbReference>
<dbReference type="BioGRID-ORCS" id="69634">
    <property type="hits" value="2 hits in 78 CRISPR screens"/>
</dbReference>
<dbReference type="ChiTaRS" id="Clybl">
    <property type="organism name" value="mouse"/>
</dbReference>
<dbReference type="PRO" id="PR:Q8R4N0"/>
<dbReference type="Proteomes" id="UP000000589">
    <property type="component" value="Chromosome 14"/>
</dbReference>
<dbReference type="RNAct" id="Q8R4N0">
    <property type="molecule type" value="protein"/>
</dbReference>
<dbReference type="Bgee" id="ENSMUSG00000025545">
    <property type="expression patterns" value="Expressed in interventricular septum and 250 other cell types or tissues"/>
</dbReference>
<dbReference type="GO" id="GO:0005739">
    <property type="term" value="C:mitochondrion"/>
    <property type="evidence" value="ECO:0007005"/>
    <property type="project" value="MGI"/>
</dbReference>
<dbReference type="GO" id="GO:0047777">
    <property type="term" value="F:(S)-citramalyl-CoA lyase activity"/>
    <property type="evidence" value="ECO:0000314"/>
    <property type="project" value="UniProtKB"/>
</dbReference>
<dbReference type="GO" id="GO:0016787">
    <property type="term" value="F:hydrolase activity"/>
    <property type="evidence" value="ECO:0007669"/>
    <property type="project" value="UniProtKB-KW"/>
</dbReference>
<dbReference type="GO" id="GO:0000287">
    <property type="term" value="F:magnesium ion binding"/>
    <property type="evidence" value="ECO:0000250"/>
    <property type="project" value="UniProtKB"/>
</dbReference>
<dbReference type="GO" id="GO:0004474">
    <property type="term" value="F:malate synthase activity"/>
    <property type="evidence" value="ECO:0000250"/>
    <property type="project" value="UniProtKB"/>
</dbReference>
<dbReference type="GO" id="GO:0106121">
    <property type="term" value="P:positive regulation of cobalamin metabolic process"/>
    <property type="evidence" value="ECO:0000315"/>
    <property type="project" value="CACAO"/>
</dbReference>
<dbReference type="GO" id="GO:0070207">
    <property type="term" value="P:protein homotrimerization"/>
    <property type="evidence" value="ECO:0000250"/>
    <property type="project" value="UniProtKB"/>
</dbReference>
<dbReference type="GO" id="GO:0106064">
    <property type="term" value="P:regulation of cobalamin metabolic process"/>
    <property type="evidence" value="ECO:0000314"/>
    <property type="project" value="UniProtKB"/>
</dbReference>
<dbReference type="FunFam" id="3.20.20.60:FF:000014">
    <property type="entry name" value="Citrate lyase subunit beta-like protein"/>
    <property type="match status" value="1"/>
</dbReference>
<dbReference type="Gene3D" id="3.20.20.60">
    <property type="entry name" value="Phosphoenolpyruvate-binding domains"/>
    <property type="match status" value="1"/>
</dbReference>
<dbReference type="InterPro" id="IPR005000">
    <property type="entry name" value="Aldolase/citrate-lyase_domain"/>
</dbReference>
<dbReference type="InterPro" id="IPR040186">
    <property type="entry name" value="Citramalyl-CoA_lyase"/>
</dbReference>
<dbReference type="InterPro" id="IPR011206">
    <property type="entry name" value="Citrate_lyase_beta/mcl1/mcl2"/>
</dbReference>
<dbReference type="InterPro" id="IPR015813">
    <property type="entry name" value="Pyrv/PenolPyrv_kinase-like_dom"/>
</dbReference>
<dbReference type="InterPro" id="IPR040442">
    <property type="entry name" value="Pyrv_kinase-like_dom_sf"/>
</dbReference>
<dbReference type="PANTHER" id="PTHR11105:SF0">
    <property type="entry name" value="CITRAMALYL-COA LYASE, MITOCHONDRIAL"/>
    <property type="match status" value="1"/>
</dbReference>
<dbReference type="PANTHER" id="PTHR11105">
    <property type="entry name" value="CITRATE LYASE SUBUNIT BETA-RELATED"/>
    <property type="match status" value="1"/>
</dbReference>
<dbReference type="Pfam" id="PF03328">
    <property type="entry name" value="HpcH_HpaI"/>
    <property type="match status" value="1"/>
</dbReference>
<dbReference type="PIRSF" id="PIRSF015582">
    <property type="entry name" value="Cit_lyase_B"/>
    <property type="match status" value="1"/>
</dbReference>
<dbReference type="SUPFAM" id="SSF51621">
    <property type="entry name" value="Phosphoenolpyruvate/pyruvate domain"/>
    <property type="match status" value="1"/>
</dbReference>
<feature type="transit peptide" description="Mitochondrion" evidence="3">
    <location>
        <begin position="1"/>
        <end position="20"/>
    </location>
</feature>
<feature type="chain" id="PRO_0000286390" description="Citramalyl-CoA lyase, mitochondrial">
    <location>
        <begin position="21"/>
        <end position="338"/>
    </location>
</feature>
<feature type="active site" evidence="1">
    <location>
        <position position="318"/>
    </location>
</feature>
<feature type="binding site" evidence="1">
    <location>
        <position position="48"/>
    </location>
    <ligand>
        <name>substrate</name>
    </ligand>
</feature>
<feature type="binding site" evidence="1">
    <location>
        <position position="55"/>
    </location>
    <ligand>
        <name>substrate</name>
    </ligand>
</feature>
<feature type="binding site" evidence="1">
    <location>
        <position position="59"/>
    </location>
    <ligand>
        <name>substrate</name>
    </ligand>
</feature>
<feature type="binding site" evidence="1">
    <location>
        <position position="105"/>
    </location>
    <ligand>
        <name>substrate</name>
    </ligand>
</feature>
<feature type="binding site" evidence="1">
    <location>
        <position position="169"/>
    </location>
    <ligand>
        <name>Mg(2+)</name>
        <dbReference type="ChEBI" id="CHEBI:18420"/>
    </ligand>
</feature>
<feature type="binding site" evidence="1">
    <location>
        <position position="204"/>
    </location>
    <ligand>
        <name>Mg(2+)</name>
        <dbReference type="ChEBI" id="CHEBI:18420"/>
    </ligand>
</feature>
<feature type="binding site" evidence="1">
    <location>
        <begin position="270"/>
        <end position="271"/>
    </location>
    <ligand>
        <name>substrate</name>
    </ligand>
</feature>
<feature type="modified residue" description="N6-acetyllysine" evidence="10">
    <location>
        <position position="55"/>
    </location>
</feature>
<feature type="modified residue" description="N6-acetyllysine" evidence="10">
    <location>
        <position position="59"/>
    </location>
</feature>
<feature type="modified residue" description="N6-acetyllysine" evidence="10">
    <location>
        <position position="64"/>
    </location>
</feature>
<feature type="modified residue" description="N6-acetyllysine; alternate" evidence="10">
    <location>
        <position position="80"/>
    </location>
</feature>
<feature type="modified residue" description="N6-succinyllysine; alternate" evidence="11">
    <location>
        <position position="80"/>
    </location>
</feature>
<feature type="modified residue" description="N6-acetyllysine; alternate" evidence="10">
    <location>
        <position position="90"/>
    </location>
</feature>
<feature type="modified residue" description="N6-succinyllysine; alternate" evidence="11">
    <location>
        <position position="90"/>
    </location>
</feature>
<feature type="modified residue" description="N6-succinyllysine" evidence="11">
    <location>
        <position position="307"/>
    </location>
</feature>
<feature type="sequence conflict" description="In Ref. 1; AAL84704." evidence="8" ref="1">
    <original>T</original>
    <variation>A</variation>
    <location>
        <position position="9"/>
    </location>
</feature>
<protein>
    <recommendedName>
        <fullName>Citramalyl-CoA lyase, mitochondrial</fullName>
        <ecNumber evidence="1">4.1.3.25</ecNumber>
    </recommendedName>
    <alternativeName>
        <fullName evidence="1">(3S)-malyl-CoA thioesterase</fullName>
        <ecNumber evidence="1">3.1.2.30</ecNumber>
    </alternativeName>
    <alternativeName>
        <fullName>Beta-methylmalate synthase</fullName>
        <ecNumber evidence="1">2.3.3.-</ecNumber>
    </alternativeName>
    <alternativeName>
        <fullName>Citrate lyase subunit beta-like protein, mitochondrial</fullName>
        <shortName>Citrate lyase beta-like</shortName>
    </alternativeName>
    <alternativeName>
        <fullName>Malate synthase</fullName>
        <ecNumber evidence="1">2.3.3.9</ecNumber>
    </alternativeName>
</protein>
<proteinExistence type="evidence at protein level"/>
<sequence>MALCVLRNTVRGAAALPRLKASHVVSVYKPRYSSLSNHKYVPRRAVLYVPGNDEKKIRKIPSLKVDCAVLDCEDGVAENKKNEARLRIAKTLEDFDLGTTEKCVRINSVSSGLAEVDLETFLQARVLPSSLMLPKVEGPEEIRWFSDKFSLHLKGRKLEQPMNLIPFVETAMGLLNFKAVCEETLKTGPQVGLCLDAVVFGGEDFRASIGATSNKDTQDILYARQKVVVTAKAFGLQAIDLVYIDFRDEDGLLRQSREAAAMGFTGKQVIHPNQIAVVQEQFTPTPEKIQWAEELIAAFKEHQQLGKGAFTFRGSMIDMPLLKQAQNIVTLATSIKEK</sequence>
<name>CLYBL_MOUSE</name>
<organism>
    <name type="scientific">Mus musculus</name>
    <name type="common">Mouse</name>
    <dbReference type="NCBI Taxonomy" id="10090"/>
    <lineage>
        <taxon>Eukaryota</taxon>
        <taxon>Metazoa</taxon>
        <taxon>Chordata</taxon>
        <taxon>Craniata</taxon>
        <taxon>Vertebrata</taxon>
        <taxon>Euteleostomi</taxon>
        <taxon>Mammalia</taxon>
        <taxon>Eutheria</taxon>
        <taxon>Euarchontoglires</taxon>
        <taxon>Glires</taxon>
        <taxon>Rodentia</taxon>
        <taxon>Myomorpha</taxon>
        <taxon>Muroidea</taxon>
        <taxon>Muridae</taxon>
        <taxon>Murinae</taxon>
        <taxon>Mus</taxon>
        <taxon>Mus</taxon>
    </lineage>
</organism>
<gene>
    <name evidence="9" type="primary">Clybl</name>
    <name type="synonym">Clb</name>
</gene>
<evidence type="ECO:0000250" key="1">
    <source>
        <dbReference type="UniProtKB" id="Q8N0X4"/>
    </source>
</evidence>
<evidence type="ECO:0000250" key="2">
    <source>
        <dbReference type="UniProtKB" id="Q9RUZ0"/>
    </source>
</evidence>
<evidence type="ECO:0000255" key="3"/>
<evidence type="ECO:0000269" key="4">
    <source>
    </source>
</evidence>
<evidence type="ECO:0000269" key="5">
    <source>
    </source>
</evidence>
<evidence type="ECO:0000269" key="6">
    <source>
    </source>
</evidence>
<evidence type="ECO:0000269" key="7">
    <source>
    </source>
</evidence>
<evidence type="ECO:0000305" key="8"/>
<evidence type="ECO:0000312" key="9">
    <source>
        <dbReference type="MGI" id="MGI:1916884"/>
    </source>
</evidence>
<evidence type="ECO:0007744" key="10">
    <source>
    </source>
</evidence>
<evidence type="ECO:0007744" key="11">
    <source>
    </source>
</evidence>
<comment type="function">
    <text evidence="1 7">Mitochondrial citramalyl-CoA lyase indirectly involved in the vitamin B12 metabolism (PubMed:29056341). Converts citramalyl-CoA into acetyl-CoA and pyruvate in the C5-dicarboxylate catabolism pathway (By similarity). The C5-dicarboxylate catabolism pathway is required to detoxify itaconate, a vitamin B12-poisoning metabolite (PubMed:29056341). Also acts as a malate synthase in vitro, converting glyoxylate and acetyl-CoA to malate (By similarity). Also displays malyl-CoA thioesterase activity. Also acts as a beta-methylmalate synthase in vitro, by mediating conversion of glyoxylate and propionyl-CoA to beta-methylmalate (By similarity). Also has very weak citramalate synthase activity in vitro (By similarity).</text>
</comment>
<comment type="catalytic activity">
    <reaction evidence="1">
        <text>glyoxylate + acetyl-CoA + H2O = (S)-malate + CoA + H(+)</text>
        <dbReference type="Rhea" id="RHEA:18181"/>
        <dbReference type="ChEBI" id="CHEBI:15377"/>
        <dbReference type="ChEBI" id="CHEBI:15378"/>
        <dbReference type="ChEBI" id="CHEBI:15589"/>
        <dbReference type="ChEBI" id="CHEBI:36655"/>
        <dbReference type="ChEBI" id="CHEBI:57287"/>
        <dbReference type="ChEBI" id="CHEBI:57288"/>
        <dbReference type="EC" id="2.3.3.9"/>
    </reaction>
</comment>
<comment type="catalytic activity">
    <reaction evidence="1">
        <text>propanoyl-CoA + glyoxylate + H2O = 3-methylmalate + CoA + H(+)</text>
        <dbReference type="Rhea" id="RHEA:47628"/>
        <dbReference type="ChEBI" id="CHEBI:15377"/>
        <dbReference type="ChEBI" id="CHEBI:15378"/>
        <dbReference type="ChEBI" id="CHEBI:36655"/>
        <dbReference type="ChEBI" id="CHEBI:57287"/>
        <dbReference type="ChEBI" id="CHEBI:57392"/>
        <dbReference type="ChEBI" id="CHEBI:87810"/>
    </reaction>
</comment>
<comment type="catalytic activity">
    <reaction evidence="1">
        <text>(3S)-citramalyl-CoA = pyruvate + acetyl-CoA</text>
        <dbReference type="Rhea" id="RHEA:22612"/>
        <dbReference type="ChEBI" id="CHEBI:15361"/>
        <dbReference type="ChEBI" id="CHEBI:57288"/>
        <dbReference type="ChEBI" id="CHEBI:58668"/>
        <dbReference type="EC" id="4.1.3.25"/>
    </reaction>
</comment>
<comment type="catalytic activity">
    <reaction evidence="1">
        <text>(S)-malyl-CoA + H2O = (S)-malate + CoA + H(+)</text>
        <dbReference type="Rhea" id="RHEA:38291"/>
        <dbReference type="ChEBI" id="CHEBI:15377"/>
        <dbReference type="ChEBI" id="CHEBI:15378"/>
        <dbReference type="ChEBI" id="CHEBI:15589"/>
        <dbReference type="ChEBI" id="CHEBI:57287"/>
        <dbReference type="ChEBI" id="CHEBI:57317"/>
        <dbReference type="EC" id="3.1.2.30"/>
    </reaction>
</comment>
<comment type="cofactor">
    <cofactor evidence="1">
        <name>Mg(2+)</name>
        <dbReference type="ChEBI" id="CHEBI:18420"/>
    </cofactor>
    <text evidence="2">Binds 1 Mg(2+) ion per subunit.</text>
</comment>
<comment type="subunit">
    <text evidence="1">Homotrimer.</text>
</comment>
<comment type="subcellular location">
    <subcellularLocation>
        <location evidence="5">Mitochondrion</location>
    </subcellularLocation>
</comment>
<comment type="tissue specificity">
    <text evidence="4 6">Detected in brown fat, brain, liver, kidney, heart, skeletal muscle and ovary (at protein level).</text>
</comment>
<comment type="similarity">
    <text evidence="8">Belongs to the HpcH/HpaI aldolase family. Citrate lyase beta subunit-like subfamily.</text>
</comment>
<comment type="caution">
    <text evidence="8">This organism lacks the other subunits that are necessary for ATP-independent citrate lyase activity. Even though this protein has clear similarity to citrate lyase beta subunit, it is expected to have a somewhat different enzyme activity.</text>
</comment>
<reference key="1">
    <citation type="journal article" date="2001" name="Biochem. Biophys. Res. Commun.">
        <title>Molecular cloning of novel mouse and human putative citrate lyase beta-subunit.</title>
        <authorList>
            <person name="Morikawa J."/>
            <person name="Nishimura Y."/>
            <person name="Uchida A."/>
            <person name="Tanaka T."/>
        </authorList>
    </citation>
    <scope>NUCLEOTIDE SEQUENCE [MRNA]</scope>
    <scope>TISSUE SPECIFICITY</scope>
</reference>
<reference key="2">
    <citation type="journal article" date="2005" name="Science">
        <title>The transcriptional landscape of the mammalian genome.</title>
        <authorList>
            <person name="Carninci P."/>
            <person name="Kasukawa T."/>
            <person name="Katayama S."/>
            <person name="Gough J."/>
            <person name="Frith M.C."/>
            <person name="Maeda N."/>
            <person name="Oyama R."/>
            <person name="Ravasi T."/>
            <person name="Lenhard B."/>
            <person name="Wells C."/>
            <person name="Kodzius R."/>
            <person name="Shimokawa K."/>
            <person name="Bajic V.B."/>
            <person name="Brenner S.E."/>
            <person name="Batalov S."/>
            <person name="Forrest A.R."/>
            <person name="Zavolan M."/>
            <person name="Davis M.J."/>
            <person name="Wilming L.G."/>
            <person name="Aidinis V."/>
            <person name="Allen J.E."/>
            <person name="Ambesi-Impiombato A."/>
            <person name="Apweiler R."/>
            <person name="Aturaliya R.N."/>
            <person name="Bailey T.L."/>
            <person name="Bansal M."/>
            <person name="Baxter L."/>
            <person name="Beisel K.W."/>
            <person name="Bersano T."/>
            <person name="Bono H."/>
            <person name="Chalk A.M."/>
            <person name="Chiu K.P."/>
            <person name="Choudhary V."/>
            <person name="Christoffels A."/>
            <person name="Clutterbuck D.R."/>
            <person name="Crowe M.L."/>
            <person name="Dalla E."/>
            <person name="Dalrymple B.P."/>
            <person name="de Bono B."/>
            <person name="Della Gatta G."/>
            <person name="di Bernardo D."/>
            <person name="Down T."/>
            <person name="Engstrom P."/>
            <person name="Fagiolini M."/>
            <person name="Faulkner G."/>
            <person name="Fletcher C.F."/>
            <person name="Fukushima T."/>
            <person name="Furuno M."/>
            <person name="Futaki S."/>
            <person name="Gariboldi M."/>
            <person name="Georgii-Hemming P."/>
            <person name="Gingeras T.R."/>
            <person name="Gojobori T."/>
            <person name="Green R.E."/>
            <person name="Gustincich S."/>
            <person name="Harbers M."/>
            <person name="Hayashi Y."/>
            <person name="Hensch T.K."/>
            <person name="Hirokawa N."/>
            <person name="Hill D."/>
            <person name="Huminiecki L."/>
            <person name="Iacono M."/>
            <person name="Ikeo K."/>
            <person name="Iwama A."/>
            <person name="Ishikawa T."/>
            <person name="Jakt M."/>
            <person name="Kanapin A."/>
            <person name="Katoh M."/>
            <person name="Kawasawa Y."/>
            <person name="Kelso J."/>
            <person name="Kitamura H."/>
            <person name="Kitano H."/>
            <person name="Kollias G."/>
            <person name="Krishnan S.P."/>
            <person name="Kruger A."/>
            <person name="Kummerfeld S.K."/>
            <person name="Kurochkin I.V."/>
            <person name="Lareau L.F."/>
            <person name="Lazarevic D."/>
            <person name="Lipovich L."/>
            <person name="Liu J."/>
            <person name="Liuni S."/>
            <person name="McWilliam S."/>
            <person name="Madan Babu M."/>
            <person name="Madera M."/>
            <person name="Marchionni L."/>
            <person name="Matsuda H."/>
            <person name="Matsuzawa S."/>
            <person name="Miki H."/>
            <person name="Mignone F."/>
            <person name="Miyake S."/>
            <person name="Morris K."/>
            <person name="Mottagui-Tabar S."/>
            <person name="Mulder N."/>
            <person name="Nakano N."/>
            <person name="Nakauchi H."/>
            <person name="Ng P."/>
            <person name="Nilsson R."/>
            <person name="Nishiguchi S."/>
            <person name="Nishikawa S."/>
            <person name="Nori F."/>
            <person name="Ohara O."/>
            <person name="Okazaki Y."/>
            <person name="Orlando V."/>
            <person name="Pang K.C."/>
            <person name="Pavan W.J."/>
            <person name="Pavesi G."/>
            <person name="Pesole G."/>
            <person name="Petrovsky N."/>
            <person name="Piazza S."/>
            <person name="Reed J."/>
            <person name="Reid J.F."/>
            <person name="Ring B.Z."/>
            <person name="Ringwald M."/>
            <person name="Rost B."/>
            <person name="Ruan Y."/>
            <person name="Salzberg S.L."/>
            <person name="Sandelin A."/>
            <person name="Schneider C."/>
            <person name="Schoenbach C."/>
            <person name="Sekiguchi K."/>
            <person name="Semple C.A."/>
            <person name="Seno S."/>
            <person name="Sessa L."/>
            <person name="Sheng Y."/>
            <person name="Shibata Y."/>
            <person name="Shimada H."/>
            <person name="Shimada K."/>
            <person name="Silva D."/>
            <person name="Sinclair B."/>
            <person name="Sperling S."/>
            <person name="Stupka E."/>
            <person name="Sugiura K."/>
            <person name="Sultana R."/>
            <person name="Takenaka Y."/>
            <person name="Taki K."/>
            <person name="Tammoja K."/>
            <person name="Tan S.L."/>
            <person name="Tang S."/>
            <person name="Taylor M.S."/>
            <person name="Tegner J."/>
            <person name="Teichmann S.A."/>
            <person name="Ueda H.R."/>
            <person name="van Nimwegen E."/>
            <person name="Verardo R."/>
            <person name="Wei C.L."/>
            <person name="Yagi K."/>
            <person name="Yamanishi H."/>
            <person name="Zabarovsky E."/>
            <person name="Zhu S."/>
            <person name="Zimmer A."/>
            <person name="Hide W."/>
            <person name="Bult C."/>
            <person name="Grimmond S.M."/>
            <person name="Teasdale R.D."/>
            <person name="Liu E.T."/>
            <person name="Brusic V."/>
            <person name="Quackenbush J."/>
            <person name="Wahlestedt C."/>
            <person name="Mattick J.S."/>
            <person name="Hume D.A."/>
            <person name="Kai C."/>
            <person name="Sasaki D."/>
            <person name="Tomaru Y."/>
            <person name="Fukuda S."/>
            <person name="Kanamori-Katayama M."/>
            <person name="Suzuki M."/>
            <person name="Aoki J."/>
            <person name="Arakawa T."/>
            <person name="Iida J."/>
            <person name="Imamura K."/>
            <person name="Itoh M."/>
            <person name="Kato T."/>
            <person name="Kawaji H."/>
            <person name="Kawagashira N."/>
            <person name="Kawashima T."/>
            <person name="Kojima M."/>
            <person name="Kondo S."/>
            <person name="Konno H."/>
            <person name="Nakano K."/>
            <person name="Ninomiya N."/>
            <person name="Nishio T."/>
            <person name="Okada M."/>
            <person name="Plessy C."/>
            <person name="Shibata K."/>
            <person name="Shiraki T."/>
            <person name="Suzuki S."/>
            <person name="Tagami M."/>
            <person name="Waki K."/>
            <person name="Watahiki A."/>
            <person name="Okamura-Oho Y."/>
            <person name="Suzuki H."/>
            <person name="Kawai J."/>
            <person name="Hayashizaki Y."/>
        </authorList>
    </citation>
    <scope>NUCLEOTIDE SEQUENCE [LARGE SCALE MRNA]</scope>
    <source>
        <strain>C57BL/6J</strain>
        <tissue>Tongue</tissue>
    </source>
</reference>
<reference key="3">
    <citation type="journal article" date="2004" name="Genome Res.">
        <title>The status, quality, and expansion of the NIH full-length cDNA project: the Mammalian Gene Collection (MGC).</title>
        <authorList>
            <consortium name="The MGC Project Team"/>
        </authorList>
    </citation>
    <scope>NUCLEOTIDE SEQUENCE [LARGE SCALE MRNA]</scope>
    <source>
        <strain>FVB/N</strain>
        <tissue>Kidney</tissue>
    </source>
</reference>
<reference key="4">
    <citation type="journal article" date="2008" name="Cell">
        <title>A mitochondrial protein compendium elucidates complex I disease biology.</title>
        <authorList>
            <person name="Pagliarini D.J."/>
            <person name="Calvo S.E."/>
            <person name="Chang B."/>
            <person name="Sheth S.A."/>
            <person name="Vafai S.B."/>
            <person name="Ong S.E."/>
            <person name="Walford G.A."/>
            <person name="Sugiana C."/>
            <person name="Boneh A."/>
            <person name="Chen W.K."/>
            <person name="Hill D.E."/>
            <person name="Vidal M."/>
            <person name="Evans J.G."/>
            <person name="Thorburn D.R."/>
            <person name="Carr S.A."/>
            <person name="Mootha V.K."/>
        </authorList>
    </citation>
    <scope>SUBCELLULAR LOCATION [LARGE SCALE ANALYSIS]</scope>
</reference>
<reference key="5">
    <citation type="journal article" date="2010" name="Cell">
        <title>A tissue-specific atlas of mouse protein phosphorylation and expression.</title>
        <authorList>
            <person name="Huttlin E.L."/>
            <person name="Jedrychowski M.P."/>
            <person name="Elias J.E."/>
            <person name="Goswami T."/>
            <person name="Rad R."/>
            <person name="Beausoleil S.A."/>
            <person name="Villen J."/>
            <person name="Haas W."/>
            <person name="Sowa M.E."/>
            <person name="Gygi S.P."/>
        </authorList>
    </citation>
    <scope>IDENTIFICATION BY MASS SPECTROMETRY [LARGE SCALE ANALYSIS]</scope>
    <source>
        <tissue>Brain</tissue>
        <tissue>Brown adipose tissue</tissue>
        <tissue>Heart</tissue>
        <tissue>Kidney</tissue>
        <tissue>Liver</tissue>
        <tissue>Lung</tissue>
        <tissue>Pancreas</tissue>
        <tissue>Spleen</tissue>
        <tissue>Testis</tissue>
    </source>
</reference>
<reference key="6">
    <citation type="journal article" date="2013" name="Mol. Cell">
        <title>SIRT5-mediated lysine desuccinylation impacts diverse metabolic pathways.</title>
        <authorList>
            <person name="Park J."/>
            <person name="Chen Y."/>
            <person name="Tishkoff D.X."/>
            <person name="Peng C."/>
            <person name="Tan M."/>
            <person name="Dai L."/>
            <person name="Xie Z."/>
            <person name="Zhang Y."/>
            <person name="Zwaans B.M."/>
            <person name="Skinner M.E."/>
            <person name="Lombard D.B."/>
            <person name="Zhao Y."/>
        </authorList>
    </citation>
    <scope>SUCCINYLATION [LARGE SCALE ANALYSIS] AT LYS-80; LYS-90 AND LYS-307</scope>
    <scope>IDENTIFICATION BY MASS SPECTROMETRY [LARGE SCALE ANALYSIS]</scope>
    <source>
        <tissue>Embryonic fibroblast</tissue>
        <tissue>Liver</tissue>
    </source>
</reference>
<reference key="7">
    <citation type="journal article" date="2013" name="Proc. Natl. Acad. Sci. U.S.A.">
        <title>Label-free quantitative proteomics of the lysine acetylome in mitochondria identifies substrates of SIRT3 in metabolic pathways.</title>
        <authorList>
            <person name="Rardin M.J."/>
            <person name="Newman J.C."/>
            <person name="Held J.M."/>
            <person name="Cusack M.P."/>
            <person name="Sorensen D.J."/>
            <person name="Li B."/>
            <person name="Schilling B."/>
            <person name="Mooney S.D."/>
            <person name="Kahn C.R."/>
            <person name="Verdin E."/>
            <person name="Gibson B.W."/>
        </authorList>
    </citation>
    <scope>ACETYLATION [LARGE SCALE ANALYSIS] AT LYS-55; LYS-59; LYS-64; LYS-80 AND LYS-90</scope>
    <scope>IDENTIFICATION BY MASS SPECTROMETRY [LARGE SCALE ANALYSIS]</scope>
    <source>
        <tissue>Liver</tissue>
    </source>
</reference>
<reference key="8">
    <citation type="journal article" date="2014" name="Hum. Mol. Genet.">
        <title>CLYBL is a polymorphic human enzyme with malate synthase and beta-methylmalate synthase activity.</title>
        <authorList>
            <person name="Strittmatter L."/>
            <person name="Li Y."/>
            <person name="Nakatsuka N.J."/>
            <person name="Calvo S.E."/>
            <person name="Grabarek Z."/>
            <person name="Mootha V.K."/>
        </authorList>
    </citation>
    <scope>TISSUE SPECIFICITY</scope>
</reference>
<reference key="9">
    <citation type="journal article" date="2017" name="Cell">
        <title>The human knockout gene CLYBL connects itaconate to vitamin B12.</title>
        <authorList>
            <person name="Shen H."/>
            <person name="Campanello G.C."/>
            <person name="Flicker D."/>
            <person name="Grabarek Z."/>
            <person name="Hu J."/>
            <person name="Luo C."/>
            <person name="Banerjee R."/>
            <person name="Mootha V.K."/>
        </authorList>
    </citation>
    <scope>FUNCTION</scope>
</reference>